<reference key="1">
    <citation type="journal article" date="2008" name="Nat. Biotechnol.">
        <title>Genome sequencing and analysis of the biomass-degrading fungus Trichoderma reesei (syn. Hypocrea jecorina).</title>
        <authorList>
            <person name="Martinez D."/>
            <person name="Berka R.M."/>
            <person name="Henrissat B."/>
            <person name="Saloheimo M."/>
            <person name="Arvas M."/>
            <person name="Baker S.E."/>
            <person name="Chapman J."/>
            <person name="Chertkov O."/>
            <person name="Coutinho P.M."/>
            <person name="Cullen D."/>
            <person name="Danchin E.G."/>
            <person name="Grigoriev I.V."/>
            <person name="Harris P."/>
            <person name="Jackson M."/>
            <person name="Kubicek C.P."/>
            <person name="Han C.S."/>
            <person name="Ho I."/>
            <person name="Larrondo L.F."/>
            <person name="de Leon A.L."/>
            <person name="Magnuson J.K."/>
            <person name="Merino S."/>
            <person name="Misra M."/>
            <person name="Nelson B."/>
            <person name="Putnam N."/>
            <person name="Robbertse B."/>
            <person name="Salamov A.A."/>
            <person name="Schmoll M."/>
            <person name="Terry A."/>
            <person name="Thayer N."/>
            <person name="Westerholm-Parvinen A."/>
            <person name="Schoch C.L."/>
            <person name="Yao J."/>
            <person name="Barabote R."/>
            <person name="Nelson M.A."/>
            <person name="Detter C."/>
            <person name="Bruce D."/>
            <person name="Kuske C.R."/>
            <person name="Xie G."/>
            <person name="Richardson P."/>
            <person name="Rokhsar D.S."/>
            <person name="Lucas S.M."/>
            <person name="Rubin E.M."/>
            <person name="Dunn-Coleman N."/>
            <person name="Ward M."/>
            <person name="Brettin T.S."/>
        </authorList>
    </citation>
    <scope>NUCLEOTIDE SEQUENCE [LARGE SCALE GENOMIC DNA]</scope>
    <source>
        <strain>QM6a</strain>
    </source>
</reference>
<reference key="2">
    <citation type="journal article" date="2016" name="BMC Evol. Biol.">
        <title>Several steps of lateral gene transfer followed by events of 'birth-and-death' evolution shaped a fungal sorbicillinoid biosynthetic gene cluster.</title>
        <authorList>
            <person name="Druzhinina I.S."/>
            <person name="Kubicek E.M."/>
            <person name="Kubicek C.P."/>
        </authorList>
    </citation>
    <scope>IDENTIFICATION</scope>
</reference>
<reference key="3">
    <citation type="journal article" date="2017" name="Front. Microbiol.">
        <title>In vivo study of the sorbicillinoid gene cluster in Trichoderma reesei.</title>
        <authorList>
            <person name="Derntl C."/>
            <person name="Guzman-Chavez F."/>
            <person name="Mello-de-Sousa T.M."/>
            <person name="Busse H.J."/>
            <person name="Driessen A.J.M."/>
            <person name="Mach R.L."/>
            <person name="Mach-Aigner A.R."/>
        </authorList>
    </citation>
    <scope>FUNCTION</scope>
</reference>
<reference key="4">
    <citation type="journal article" date="2017" name="PLoS ONE">
        <title>A CRE1-regulated cluster is responsible for light dependent production of dihydrotrichotetronin in Trichoderma reesei.</title>
        <authorList>
            <person name="Monroy A.A."/>
            <person name="Stappler E."/>
            <person name="Schuster A."/>
            <person name="Sulyok M."/>
            <person name="Schmoll M."/>
        </authorList>
    </citation>
    <scope>FUNCTION</scope>
    <scope>INDUCTION</scope>
    <scope>DISRUPTION PHENOTYPE</scope>
</reference>
<evidence type="ECO:0000255" key="1">
    <source>
        <dbReference type="PROSITE-ProRule" id="PRU00227"/>
    </source>
</evidence>
<evidence type="ECO:0000256" key="2">
    <source>
        <dbReference type="SAM" id="MobiDB-lite"/>
    </source>
</evidence>
<evidence type="ECO:0000269" key="3">
    <source>
    </source>
</evidence>
<evidence type="ECO:0000269" key="4">
    <source>
    </source>
</evidence>
<evidence type="ECO:0000303" key="5">
    <source>
    </source>
</evidence>
<evidence type="ECO:0000303" key="6">
    <source>
    </source>
</evidence>
<dbReference type="EMBL" id="GL985056">
    <property type="protein sequence ID" value="EGR52184.1"/>
    <property type="molecule type" value="Genomic_DNA"/>
</dbReference>
<dbReference type="RefSeq" id="XP_006961158.1">
    <property type="nucleotide sequence ID" value="XM_006961096.1"/>
</dbReference>
<dbReference type="SMR" id="G0R6T2"/>
<dbReference type="STRING" id="431241.G0R6T2"/>
<dbReference type="EnsemblFungi" id="EGR52184">
    <property type="protein sequence ID" value="EGR52184"/>
    <property type="gene ID" value="TRIREDRAFT_102497"/>
</dbReference>
<dbReference type="GeneID" id="18480409"/>
<dbReference type="KEGG" id="tre:TRIREDRAFT_102497"/>
<dbReference type="VEuPathDB" id="FungiDB:TRIREDRAFT_102497"/>
<dbReference type="eggNOG" id="ENOG502RJRW">
    <property type="taxonomic scope" value="Eukaryota"/>
</dbReference>
<dbReference type="HOGENOM" id="CLU_008511_3_1_1"/>
<dbReference type="OrthoDB" id="424974at2759"/>
<dbReference type="Proteomes" id="UP000008984">
    <property type="component" value="Unassembled WGS sequence"/>
</dbReference>
<dbReference type="GO" id="GO:0005634">
    <property type="term" value="C:nucleus"/>
    <property type="evidence" value="ECO:0007669"/>
    <property type="project" value="UniProtKB-SubCell"/>
</dbReference>
<dbReference type="GO" id="GO:0000981">
    <property type="term" value="F:DNA-binding transcription factor activity, RNA polymerase II-specific"/>
    <property type="evidence" value="ECO:0007669"/>
    <property type="project" value="InterPro"/>
</dbReference>
<dbReference type="GO" id="GO:0000978">
    <property type="term" value="F:RNA polymerase II cis-regulatory region sequence-specific DNA binding"/>
    <property type="evidence" value="ECO:0007669"/>
    <property type="project" value="TreeGrafter"/>
</dbReference>
<dbReference type="GO" id="GO:0008270">
    <property type="term" value="F:zinc ion binding"/>
    <property type="evidence" value="ECO:0007669"/>
    <property type="project" value="InterPro"/>
</dbReference>
<dbReference type="GO" id="GO:0006351">
    <property type="term" value="P:DNA-templated transcription"/>
    <property type="evidence" value="ECO:0007669"/>
    <property type="project" value="InterPro"/>
</dbReference>
<dbReference type="GO" id="GO:0000435">
    <property type="term" value="P:positive regulation of transcription from RNA polymerase II promoter by galactose"/>
    <property type="evidence" value="ECO:0007669"/>
    <property type="project" value="TreeGrafter"/>
</dbReference>
<dbReference type="CDD" id="cd12148">
    <property type="entry name" value="fungal_TF_MHR"/>
    <property type="match status" value="1"/>
</dbReference>
<dbReference type="CDD" id="cd00067">
    <property type="entry name" value="GAL4"/>
    <property type="match status" value="1"/>
</dbReference>
<dbReference type="Gene3D" id="4.10.240.10">
    <property type="entry name" value="Zn(2)-C6 fungal-type DNA-binding domain"/>
    <property type="match status" value="1"/>
</dbReference>
<dbReference type="InterPro" id="IPR051127">
    <property type="entry name" value="Fungal_SecMet_Regulators"/>
</dbReference>
<dbReference type="InterPro" id="IPR007219">
    <property type="entry name" value="Transcription_factor_dom_fun"/>
</dbReference>
<dbReference type="InterPro" id="IPR036864">
    <property type="entry name" value="Zn2-C6_fun-type_DNA-bd_sf"/>
</dbReference>
<dbReference type="InterPro" id="IPR001138">
    <property type="entry name" value="Zn2Cys6_DnaBD"/>
</dbReference>
<dbReference type="PANTHER" id="PTHR47424">
    <property type="entry name" value="REGULATORY PROTEIN GAL4"/>
    <property type="match status" value="1"/>
</dbReference>
<dbReference type="PANTHER" id="PTHR47424:SF3">
    <property type="entry name" value="REGULATORY PROTEIN GAL4"/>
    <property type="match status" value="1"/>
</dbReference>
<dbReference type="Pfam" id="PF04082">
    <property type="entry name" value="Fungal_trans"/>
    <property type="match status" value="1"/>
</dbReference>
<dbReference type="Pfam" id="PF00172">
    <property type="entry name" value="Zn_clus"/>
    <property type="match status" value="1"/>
</dbReference>
<dbReference type="PRINTS" id="PR00755">
    <property type="entry name" value="AFLATOXINBRP"/>
</dbReference>
<dbReference type="SMART" id="SM00066">
    <property type="entry name" value="GAL4"/>
    <property type="match status" value="1"/>
</dbReference>
<dbReference type="SUPFAM" id="SSF57701">
    <property type="entry name" value="Zn2/Cys6 DNA-binding domain"/>
    <property type="match status" value="1"/>
</dbReference>
<dbReference type="PROSITE" id="PS00463">
    <property type="entry name" value="ZN2_CY6_FUNGAL_1"/>
    <property type="match status" value="1"/>
</dbReference>
<dbReference type="PROSITE" id="PS50048">
    <property type="entry name" value="ZN2_CY6_FUNGAL_2"/>
    <property type="match status" value="1"/>
</dbReference>
<gene>
    <name evidence="5" type="primary">sor3</name>
    <name evidence="6" type="synonym">ypr2</name>
    <name type="ORF">TRIREDRAFT_102497</name>
</gene>
<proteinExistence type="evidence at transcript level"/>
<comment type="function">
    <text evidence="3 4">Transcription factor that acts in concert with sor4 which is a transcriptional activator of the gene cluster that mediates the biosynthesis of sorbicillinoids, a diverse group of yellow secondary metabolites that restrict growth of competing pathogenic fungi but not of bacteria (PubMed:28809958, PubMed:29104566). Regulates the cluster genes in a light dependent manner (PubMed:28809958). Also plays a direct or indirect role in regulation of paracelsin biosynthesis and cellulase gene expression (PubMed:28809958).</text>
</comment>
<comment type="subcellular location">
    <subcellularLocation>
        <location evidence="1">Nucleus</location>
    </subcellularLocation>
</comment>
<comment type="induction">
    <text evidence="3">The promoter contains putative CRE1 binding motifs 5'-SYGGRG-3' and expression is differentially regulated in light and darkness by CRE1 (PubMed:28809958). Photoreceptors BLR1 and BLR2 negatively regulate the expression, while ENV1 exerts positive regulation (PubMed:28809958).</text>
</comment>
<comment type="disruption phenotype">
    <text evidence="3">Decreases the production of trichodimerol in light and darkness (PubMed:28809958). Also impacts production of paracelsin in a light dependent manner, with increased paracelsin levels in light (PubMed:28809958). Also results in increased cbh1 transcript levels and correspondingly increased specific cellulase activity (PubMed:28809958).</text>
</comment>
<sequence length="664" mass="74747">MSARQDEDQRLQAQTQAQAQVQAQAPLSLYRERLKIANACQSCRASKVKCDGGRPVCARCQKRGRACSYSQHDAASPRGRGRQRAKAPTRQPRPIRSRASVELPVTAPTPVTAQASPLIAQDYSLQTPSATQTPSTTGFSGSSDLEHVHEDRDESRAFYAAHGRFAGEVSSTIDKMAGLSPDTTCSLVPFVDAPLFGDVGEPPRNVVLDFASDLPRAYADRLLAIYWHHVHPVEPVLDQQQFCRTYDAFYSGSGTPLHVDRDIWLSTLNIVFALAVQIQESIPMQKRDDEANRYFQRAWALLRPEAILWKPGSLELVQCLLLMNRYLHCTNNQQKTSMAATLAIRIAQNMVCHTSEESPSSDADKDLRHKVWASCVALERPALLTGHGSDFHAWELELHEIGTHIQLAQVQSKNSMATKLGLPRLYQQDEYHAIAVQLDGCLNKWEKSLPDDWRLQNMHMIHDRRARAERYLLHFRLLHSRIYLHRPMLARLYAIKSHAPTAAAASDPSTISDRLLQECARMCLEAAQKLTSLIAEIHDPNEPIGILPWWYRVYYLHIAGIHFLAAMFASDLFTPSVERAWYQVLAALRAHEHLSLYVQQCARTFETLAARILNARCLSVNGNGIMALDDGAPGLFLDDMFQDVNFDLDEFLFSVDDTGRRTNY</sequence>
<accession>G0R6T2</accession>
<protein>
    <recommendedName>
        <fullName evidence="6">Sorbicillinoid biosynthetic cluster transcription factor sor3</fullName>
    </recommendedName>
    <alternativeName>
        <fullName evidence="5">Sorbicillinoid biosynthetic cluster protein 3</fullName>
    </alternativeName>
</protein>
<organism>
    <name type="scientific">Hypocrea jecorina (strain QM6a)</name>
    <name type="common">Trichoderma reesei</name>
    <dbReference type="NCBI Taxonomy" id="431241"/>
    <lineage>
        <taxon>Eukaryota</taxon>
        <taxon>Fungi</taxon>
        <taxon>Dikarya</taxon>
        <taxon>Ascomycota</taxon>
        <taxon>Pezizomycotina</taxon>
        <taxon>Sordariomycetes</taxon>
        <taxon>Hypocreomycetidae</taxon>
        <taxon>Hypocreales</taxon>
        <taxon>Hypocreaceae</taxon>
        <taxon>Trichoderma</taxon>
    </lineage>
</organism>
<feature type="chain" id="PRO_0000443841" description="Sorbicillinoid biosynthetic cluster transcription factor sor3">
    <location>
        <begin position="1"/>
        <end position="664"/>
    </location>
</feature>
<feature type="DNA-binding region" description="Zn(2)-C6 fungal-type" evidence="1">
    <location>
        <begin position="40"/>
        <end position="67"/>
    </location>
</feature>
<feature type="region of interest" description="Disordered" evidence="2">
    <location>
        <begin position="68"/>
        <end position="102"/>
    </location>
</feature>
<name>SORR2_HYPJQ</name>
<keyword id="KW-0238">DNA-binding</keyword>
<keyword id="KW-0479">Metal-binding</keyword>
<keyword id="KW-0539">Nucleus</keyword>
<keyword id="KW-1185">Reference proteome</keyword>
<keyword id="KW-0804">Transcription</keyword>
<keyword id="KW-0805">Transcription regulation</keyword>
<keyword id="KW-0862">Zinc</keyword>